<evidence type="ECO:0000255" key="1">
    <source>
        <dbReference type="HAMAP-Rule" id="MF_00293"/>
    </source>
</evidence>
<evidence type="ECO:0000269" key="2">
    <source>
    </source>
</evidence>
<keyword id="KW-0472">Membrane</keyword>
<keyword id="KW-1185">Reference proteome</keyword>
<keyword id="KW-0793">Thylakoid</keyword>
<keyword id="KW-0812">Transmembrane</keyword>
<keyword id="KW-1133">Transmembrane helix</keyword>
<sequence length="43" mass="4512">MESATVLSITFAVILIAITGLAVYTSFGPPSAELGDPFDDHED</sequence>
<protein>
    <recommendedName>
        <fullName evidence="1">Protein PsbN</fullName>
    </recommendedName>
</protein>
<dbReference type="EMBL" id="X58532">
    <property type="protein sequence ID" value="CAA41419.1"/>
    <property type="molecule type" value="Genomic_DNA"/>
</dbReference>
<dbReference type="EMBL" id="BA000022">
    <property type="protein sequence ID" value="BAA17630.1"/>
    <property type="molecule type" value="Genomic_DNA"/>
</dbReference>
<dbReference type="PIR" id="S16570">
    <property type="entry name" value="S16570"/>
</dbReference>
<dbReference type="SMR" id="P26286"/>
<dbReference type="IntAct" id="P26286">
    <property type="interactions" value="2"/>
</dbReference>
<dbReference type="STRING" id="1148.gene:10498497"/>
<dbReference type="PaxDb" id="1148-1652710"/>
<dbReference type="EnsemblBacteria" id="BAA17630">
    <property type="protein sequence ID" value="BAA17630"/>
    <property type="gene ID" value="BAA17630"/>
</dbReference>
<dbReference type="KEGG" id="syn:smr0009"/>
<dbReference type="eggNOG" id="ENOG50339MH">
    <property type="taxonomic scope" value="Bacteria"/>
</dbReference>
<dbReference type="InParanoid" id="P26286"/>
<dbReference type="BioCyc" id="MetaCyc:PSBN-MONOMER"/>
<dbReference type="Proteomes" id="UP000001425">
    <property type="component" value="Chromosome"/>
</dbReference>
<dbReference type="GO" id="GO:0031676">
    <property type="term" value="C:plasma membrane-derived thylakoid membrane"/>
    <property type="evidence" value="ECO:0007669"/>
    <property type="project" value="UniProtKB-SubCell"/>
</dbReference>
<dbReference type="GO" id="GO:0015979">
    <property type="term" value="P:photosynthesis"/>
    <property type="evidence" value="ECO:0007669"/>
    <property type="project" value="InterPro"/>
</dbReference>
<dbReference type="HAMAP" id="MF_00293">
    <property type="entry name" value="PSII_PsbN"/>
    <property type="match status" value="1"/>
</dbReference>
<dbReference type="InterPro" id="IPR003398">
    <property type="entry name" value="PSII_PsbN"/>
</dbReference>
<dbReference type="NCBIfam" id="NF009650">
    <property type="entry name" value="PRK13183.1"/>
    <property type="match status" value="1"/>
</dbReference>
<dbReference type="PANTHER" id="PTHR35326">
    <property type="entry name" value="PROTEIN PSBN"/>
    <property type="match status" value="1"/>
</dbReference>
<dbReference type="PANTHER" id="PTHR35326:SF3">
    <property type="entry name" value="PROTEIN PSBN"/>
    <property type="match status" value="1"/>
</dbReference>
<dbReference type="Pfam" id="PF02468">
    <property type="entry name" value="PsbN"/>
    <property type="match status" value="1"/>
</dbReference>
<reference key="1">
    <citation type="journal article" date="1991" name="Plant Mol. Biol.">
        <title>Primary structure of the psbN-psbH-petC-petA gene cluster of the cyanobacterium Synechocystis PCC 6803.</title>
        <authorList>
            <person name="Mayes S.R."/>
            <person name="Barber J."/>
        </authorList>
    </citation>
    <scope>NUCLEOTIDE SEQUENCE [GENOMIC DNA]</scope>
</reference>
<reference key="2">
    <citation type="journal article" date="1996" name="DNA Res.">
        <title>Sequence analysis of the genome of the unicellular cyanobacterium Synechocystis sp. strain PCC6803. II. Sequence determination of the entire genome and assignment of potential protein-coding regions.</title>
        <authorList>
            <person name="Kaneko T."/>
            <person name="Sato S."/>
            <person name="Kotani H."/>
            <person name="Tanaka A."/>
            <person name="Asamizu E."/>
            <person name="Nakamura Y."/>
            <person name="Miyajima N."/>
            <person name="Hirosawa M."/>
            <person name="Sugiura M."/>
            <person name="Sasamoto S."/>
            <person name="Kimura T."/>
            <person name="Hosouchi T."/>
            <person name="Matsuno A."/>
            <person name="Muraki A."/>
            <person name="Nakazaki N."/>
            <person name="Naruo K."/>
            <person name="Okumura S."/>
            <person name="Shimpo S."/>
            <person name="Takeuchi C."/>
            <person name="Wada T."/>
            <person name="Watanabe A."/>
            <person name="Yamada M."/>
            <person name="Yasuda M."/>
            <person name="Tabata S."/>
        </authorList>
    </citation>
    <scope>NUCLEOTIDE SEQUENCE [LARGE SCALE GENOMIC DNA]</scope>
    <source>
        <strain>ATCC 27184 / PCC 6803 / Kazusa</strain>
    </source>
</reference>
<reference key="3">
    <citation type="journal article" date="1993" name="Biochemistry">
        <title>Further characterization of the psbH locus of Synechocystis sp. PCC 6803: inactivation of psbH impairs QA to QB electron transport in photosystem 2.</title>
        <authorList>
            <person name="Mayers S.R."/>
            <person name="Dubbs J.M."/>
            <person name="Vass I."/>
            <person name="Hideg E."/>
            <person name="Nagy L."/>
            <person name="Barber J."/>
        </authorList>
    </citation>
    <scope>FUNCTION</scope>
    <scope>DISRUPTION PHENOTYPE</scope>
    <source>
        <strain>PCC 6803-G</strain>
    </source>
</reference>
<name>PSBN_SYNY3</name>
<organism>
    <name type="scientific">Synechocystis sp. (strain ATCC 27184 / PCC 6803 / Kazusa)</name>
    <dbReference type="NCBI Taxonomy" id="1111708"/>
    <lineage>
        <taxon>Bacteria</taxon>
        <taxon>Bacillati</taxon>
        <taxon>Cyanobacteriota</taxon>
        <taxon>Cyanophyceae</taxon>
        <taxon>Synechococcales</taxon>
        <taxon>Merismopediaceae</taxon>
        <taxon>Synechocystis</taxon>
    </lineage>
</organism>
<gene>
    <name evidence="1" type="primary">psbN</name>
    <name type="ordered locus">smr0009</name>
</gene>
<proteinExistence type="inferred from homology"/>
<comment type="function">
    <text evidence="1 2">May play a role in photosystem I and II biogenesis.</text>
</comment>
<comment type="subcellular location">
    <subcellularLocation>
        <location evidence="1">Cellular thylakoid membrane</location>
        <topology evidence="1">Single-pass membrane protein</topology>
    </subcellularLocation>
</comment>
<comment type="disruption phenotype">
    <text evidence="2">In a double psbH-psbN deletion has a no more deleterious effect than the single psbH deletion, which suggests it has no role in photosystem II.</text>
</comment>
<comment type="similarity">
    <text evidence="1">Belongs to the PsbN family.</text>
</comment>
<comment type="caution">
    <text evidence="1 2">Originally thought to be a component of PSII; based on experiments in this organism, N.tabacum and barley, and its absence from PSII in T.elongatus and T.vulcanus, this is probably not true.</text>
</comment>
<accession>P26286</accession>
<feature type="chain" id="PRO_0000207976" description="Protein PsbN">
    <location>
        <begin position="1"/>
        <end position="43"/>
    </location>
</feature>
<feature type="transmembrane region" description="Helical" evidence="1">
    <location>
        <begin position="4"/>
        <end position="24"/>
    </location>
</feature>